<dbReference type="EMBL" id="CP000569">
    <property type="protein sequence ID" value="ABN73507.1"/>
    <property type="molecule type" value="Genomic_DNA"/>
</dbReference>
<dbReference type="RefSeq" id="WP_005614634.1">
    <property type="nucleotide sequence ID" value="NC_009053.1"/>
</dbReference>
<dbReference type="SMR" id="A3MZC1"/>
<dbReference type="STRING" id="416269.APL_0403"/>
<dbReference type="EnsemblBacteria" id="ABN73507">
    <property type="protein sequence ID" value="ABN73507"/>
    <property type="gene ID" value="APL_0403"/>
</dbReference>
<dbReference type="KEGG" id="apl:APL_0403"/>
<dbReference type="eggNOG" id="COG1160">
    <property type="taxonomic scope" value="Bacteria"/>
</dbReference>
<dbReference type="HOGENOM" id="CLU_016077_5_1_6"/>
<dbReference type="Proteomes" id="UP000001432">
    <property type="component" value="Chromosome"/>
</dbReference>
<dbReference type="GO" id="GO:0016887">
    <property type="term" value="F:ATP hydrolysis activity"/>
    <property type="evidence" value="ECO:0007669"/>
    <property type="project" value="InterPro"/>
</dbReference>
<dbReference type="GO" id="GO:0005525">
    <property type="term" value="F:GTP binding"/>
    <property type="evidence" value="ECO:0007669"/>
    <property type="project" value="UniProtKB-UniRule"/>
</dbReference>
<dbReference type="GO" id="GO:0043022">
    <property type="term" value="F:ribosome binding"/>
    <property type="evidence" value="ECO:0007669"/>
    <property type="project" value="TreeGrafter"/>
</dbReference>
<dbReference type="GO" id="GO:0042254">
    <property type="term" value="P:ribosome biogenesis"/>
    <property type="evidence" value="ECO:0007669"/>
    <property type="project" value="UniProtKB-KW"/>
</dbReference>
<dbReference type="CDD" id="cd01894">
    <property type="entry name" value="EngA1"/>
    <property type="match status" value="1"/>
</dbReference>
<dbReference type="CDD" id="cd01895">
    <property type="entry name" value="EngA2"/>
    <property type="match status" value="1"/>
</dbReference>
<dbReference type="FunFam" id="3.30.300.20:FF:000004">
    <property type="entry name" value="GTPase Der"/>
    <property type="match status" value="1"/>
</dbReference>
<dbReference type="FunFam" id="3.40.50.300:FF:000040">
    <property type="entry name" value="GTPase Der"/>
    <property type="match status" value="1"/>
</dbReference>
<dbReference type="FunFam" id="3.40.50.300:FF:000057">
    <property type="entry name" value="GTPase Der"/>
    <property type="match status" value="1"/>
</dbReference>
<dbReference type="Gene3D" id="3.30.300.20">
    <property type="match status" value="1"/>
</dbReference>
<dbReference type="Gene3D" id="3.40.50.300">
    <property type="entry name" value="P-loop containing nucleotide triphosphate hydrolases"/>
    <property type="match status" value="2"/>
</dbReference>
<dbReference type="HAMAP" id="MF_00195">
    <property type="entry name" value="GTPase_Der"/>
    <property type="match status" value="1"/>
</dbReference>
<dbReference type="InterPro" id="IPR003593">
    <property type="entry name" value="AAA+_ATPase"/>
</dbReference>
<dbReference type="InterPro" id="IPR031166">
    <property type="entry name" value="G_ENGA"/>
</dbReference>
<dbReference type="InterPro" id="IPR006073">
    <property type="entry name" value="GTP-bd"/>
</dbReference>
<dbReference type="InterPro" id="IPR016484">
    <property type="entry name" value="GTPase_Der"/>
</dbReference>
<dbReference type="InterPro" id="IPR032859">
    <property type="entry name" value="KH_dom-like"/>
</dbReference>
<dbReference type="InterPro" id="IPR015946">
    <property type="entry name" value="KH_dom-like_a/b"/>
</dbReference>
<dbReference type="InterPro" id="IPR027417">
    <property type="entry name" value="P-loop_NTPase"/>
</dbReference>
<dbReference type="InterPro" id="IPR005225">
    <property type="entry name" value="Small_GTP-bd"/>
</dbReference>
<dbReference type="NCBIfam" id="TIGR03594">
    <property type="entry name" value="GTPase_EngA"/>
    <property type="match status" value="1"/>
</dbReference>
<dbReference type="NCBIfam" id="TIGR00231">
    <property type="entry name" value="small_GTP"/>
    <property type="match status" value="2"/>
</dbReference>
<dbReference type="PANTHER" id="PTHR43834">
    <property type="entry name" value="GTPASE DER"/>
    <property type="match status" value="1"/>
</dbReference>
<dbReference type="PANTHER" id="PTHR43834:SF6">
    <property type="entry name" value="GTPASE DER"/>
    <property type="match status" value="1"/>
</dbReference>
<dbReference type="Pfam" id="PF14714">
    <property type="entry name" value="KH_dom-like"/>
    <property type="match status" value="1"/>
</dbReference>
<dbReference type="Pfam" id="PF01926">
    <property type="entry name" value="MMR_HSR1"/>
    <property type="match status" value="2"/>
</dbReference>
<dbReference type="PIRSF" id="PIRSF006485">
    <property type="entry name" value="GTP-binding_EngA"/>
    <property type="match status" value="1"/>
</dbReference>
<dbReference type="PRINTS" id="PR00326">
    <property type="entry name" value="GTP1OBG"/>
</dbReference>
<dbReference type="SMART" id="SM00382">
    <property type="entry name" value="AAA"/>
    <property type="match status" value="2"/>
</dbReference>
<dbReference type="SUPFAM" id="SSF52540">
    <property type="entry name" value="P-loop containing nucleoside triphosphate hydrolases"/>
    <property type="match status" value="2"/>
</dbReference>
<dbReference type="PROSITE" id="PS51712">
    <property type="entry name" value="G_ENGA"/>
    <property type="match status" value="2"/>
</dbReference>
<proteinExistence type="inferred from homology"/>
<name>DER_ACTP2</name>
<feature type="chain" id="PRO_1000011551" description="GTPase Der">
    <location>
        <begin position="1"/>
        <end position="506"/>
    </location>
</feature>
<feature type="domain" description="EngA-type G 1">
    <location>
        <begin position="3"/>
        <end position="166"/>
    </location>
</feature>
<feature type="domain" description="EngA-type G 2">
    <location>
        <begin position="218"/>
        <end position="391"/>
    </location>
</feature>
<feature type="domain" description="KH-like" evidence="1">
    <location>
        <begin position="392"/>
        <end position="476"/>
    </location>
</feature>
<feature type="binding site" evidence="1">
    <location>
        <begin position="9"/>
        <end position="16"/>
    </location>
    <ligand>
        <name>GTP</name>
        <dbReference type="ChEBI" id="CHEBI:37565"/>
        <label>1</label>
    </ligand>
</feature>
<feature type="binding site" evidence="1">
    <location>
        <begin position="56"/>
        <end position="60"/>
    </location>
    <ligand>
        <name>GTP</name>
        <dbReference type="ChEBI" id="CHEBI:37565"/>
        <label>1</label>
    </ligand>
</feature>
<feature type="binding site" evidence="1">
    <location>
        <begin position="118"/>
        <end position="121"/>
    </location>
    <ligand>
        <name>GTP</name>
        <dbReference type="ChEBI" id="CHEBI:37565"/>
        <label>1</label>
    </ligand>
</feature>
<feature type="binding site" evidence="1">
    <location>
        <begin position="224"/>
        <end position="231"/>
    </location>
    <ligand>
        <name>GTP</name>
        <dbReference type="ChEBI" id="CHEBI:37565"/>
        <label>2</label>
    </ligand>
</feature>
<feature type="binding site" evidence="1">
    <location>
        <begin position="271"/>
        <end position="275"/>
    </location>
    <ligand>
        <name>GTP</name>
        <dbReference type="ChEBI" id="CHEBI:37565"/>
        <label>2</label>
    </ligand>
</feature>
<feature type="binding site" evidence="1">
    <location>
        <begin position="336"/>
        <end position="339"/>
    </location>
    <ligand>
        <name>GTP</name>
        <dbReference type="ChEBI" id="CHEBI:37565"/>
        <label>2</label>
    </ligand>
</feature>
<reference key="1">
    <citation type="journal article" date="2008" name="J. Bacteriol.">
        <title>The complete genome sequence of Actinobacillus pleuropneumoniae L20 (serotype 5b).</title>
        <authorList>
            <person name="Foote S.J."/>
            <person name="Bosse J.T."/>
            <person name="Bouevitch A.B."/>
            <person name="Langford P.R."/>
            <person name="Young N.M."/>
            <person name="Nash J.H.E."/>
        </authorList>
    </citation>
    <scope>NUCLEOTIDE SEQUENCE [LARGE SCALE GENOMIC DNA]</scope>
    <source>
        <strain>L20</strain>
    </source>
</reference>
<protein>
    <recommendedName>
        <fullName evidence="1">GTPase Der</fullName>
    </recommendedName>
    <alternativeName>
        <fullName evidence="1">GTP-binding protein EngA</fullName>
    </alternativeName>
</protein>
<evidence type="ECO:0000255" key="1">
    <source>
        <dbReference type="HAMAP-Rule" id="MF_00195"/>
    </source>
</evidence>
<gene>
    <name evidence="1" type="primary">der</name>
    <name type="synonym">engA</name>
    <name type="ordered locus">APL_0403</name>
</gene>
<keyword id="KW-0342">GTP-binding</keyword>
<keyword id="KW-0547">Nucleotide-binding</keyword>
<keyword id="KW-1185">Reference proteome</keyword>
<keyword id="KW-0677">Repeat</keyword>
<keyword id="KW-0690">Ribosome biogenesis</keyword>
<accession>A3MZC1</accession>
<sequence>MTPVVALVGRPNVGKSTLFNRLTRTRDALVADFPGLTRDRKYGHANIAGYDFIVIDTGGIDGTEEGVEEKMAEQSLLAIEEADVVLFLVDARAGLVPADIGIAQYLRQREKTTVVVANKTDGIDADSHCAEFYQLGLGEVEQIAAAQGRGVTQLIDQVLAPLGEQLNADQAVENEENSANEEADEWDTDFDFENEDDTALLDEALEEETEESIEDKNIKIAIVGRPNVGKSTLTNRILGEERVVVYDMPGTTRDSIYIPMERDGQQYTIIDTAGVRKRGKVNLAVEKFSVIKTLQAIQDANVVLLTIDAREGISDQDLSLLGFILNAGRSLVIVVNKWDGLSQDIKDQVKSELDRRLDFIDFARVHFISALHGSGVGNLFDSVKEAYACATQKTSTSMLTRILRMAADEHQPPLVNGRRVKLKYAHPGGYNPPIIVIHGNQVEKLADSYKRYLSNYFRKSLKIIGSPIRIQFQEGNNPFAGKKNKLTPNQLRKRKRLMKFIKKSKK</sequence>
<organism>
    <name type="scientific">Actinobacillus pleuropneumoniae serotype 5b (strain L20)</name>
    <dbReference type="NCBI Taxonomy" id="416269"/>
    <lineage>
        <taxon>Bacteria</taxon>
        <taxon>Pseudomonadati</taxon>
        <taxon>Pseudomonadota</taxon>
        <taxon>Gammaproteobacteria</taxon>
        <taxon>Pasteurellales</taxon>
        <taxon>Pasteurellaceae</taxon>
        <taxon>Actinobacillus</taxon>
    </lineage>
</organism>
<comment type="function">
    <text evidence="1">GTPase that plays an essential role in the late steps of ribosome biogenesis.</text>
</comment>
<comment type="subunit">
    <text evidence="1">Associates with the 50S ribosomal subunit.</text>
</comment>
<comment type="similarity">
    <text evidence="1">Belongs to the TRAFAC class TrmE-Era-EngA-EngB-Septin-like GTPase superfamily. EngA (Der) GTPase family.</text>
</comment>